<protein>
    <recommendedName>
        <fullName>Adrenodoxin</fullName>
    </recommendedName>
    <alternativeName>
        <fullName>Adrenal ferredoxin</fullName>
    </alternativeName>
    <alternativeName>
        <fullName>Ferredoxin-1</fullName>
    </alternativeName>
</protein>
<feature type="chain" id="PRO_0000201161" description="Adrenodoxin">
    <location>
        <begin position="1"/>
        <end position="128"/>
    </location>
</feature>
<feature type="domain" description="2Fe-2S ferredoxin-type" evidence="4">
    <location>
        <begin position="7"/>
        <end position="111"/>
    </location>
</feature>
<feature type="binding site" evidence="4">
    <location>
        <position position="46"/>
    </location>
    <ligand>
        <name>[2Fe-2S] cluster</name>
        <dbReference type="ChEBI" id="CHEBI:190135"/>
    </ligand>
</feature>
<feature type="binding site" evidence="4">
    <location>
        <position position="52"/>
    </location>
    <ligand>
        <name>[2Fe-2S] cluster</name>
        <dbReference type="ChEBI" id="CHEBI:190135"/>
    </ligand>
</feature>
<feature type="binding site" evidence="4">
    <location>
        <position position="55"/>
    </location>
    <ligand>
        <name>[2Fe-2S] cluster</name>
        <dbReference type="ChEBI" id="CHEBI:190135"/>
    </ligand>
</feature>
<feature type="binding site" evidence="4">
    <location>
        <position position="92"/>
    </location>
    <ligand>
        <name>[2Fe-2S] cluster</name>
        <dbReference type="ChEBI" id="CHEBI:190135"/>
    </ligand>
</feature>
<feature type="modified residue" description="Phosphoserine" evidence="3">
    <location>
        <position position="3"/>
    </location>
</feature>
<feature type="modified residue" description="N6-acetyllysine; alternate" evidence="3">
    <location>
        <position position="6"/>
    </location>
</feature>
<feature type="modified residue" description="N6-succinyllysine; alternate" evidence="3">
    <location>
        <position position="6"/>
    </location>
</feature>
<feature type="modified residue" description="N6-succinyllysine" evidence="3">
    <location>
        <position position="98"/>
    </location>
</feature>
<feature type="modified residue" description="Phosphoserine" evidence="2">
    <location>
        <position position="117"/>
    </location>
</feature>
<feature type="sequence conflict" description="In Ref. 2; no nucleotide entry." evidence="5" ref="2">
    <original>N</original>
    <variation>D</variation>
    <location>
        <position position="123"/>
    </location>
</feature>
<name>ADX_SHEEP</name>
<reference key="1">
    <citation type="journal article" date="1992" name="Int. J. Biochem.">
        <title>Determination of the amino acid sequence of adreno-ferredoxin from sheep adrenocortical mitochondria.</title>
        <authorList>
            <person name="Shimizu C."/>
            <person name="Tomita S."/>
            <person name="Matsuo Y."/>
            <person name="Miyatake A."/>
            <person name="Ichikawa Y."/>
        </authorList>
    </citation>
    <scope>PROTEIN SEQUENCE OF 1-127</scope>
    <source>
        <tissue>Adrenal gland</tissue>
    </source>
</reference>
<reference key="2">
    <citation type="journal article" date="1992" name="FEBS Lett.">
        <title>Expression cloning of a sheep adreno-ferredoxin using the polymerase chain reaction.</title>
        <authorList>
            <person name="Matsuo Y."/>
            <person name="Tsujita M."/>
            <person name="Mizoguchi K."/>
            <person name="Ichikawa Y."/>
        </authorList>
    </citation>
    <scope>NUCLEOTIDE SEQUENCE [MRNA] OF 7-128</scope>
</reference>
<accession>P29330</accession>
<proteinExistence type="evidence at protein level"/>
<sequence length="128" mass="14014">SSSEDKVTVNFINRDGETLTTKGKVGDSLLDVVVENNLDIDGFGACEGTLACSTCHLIFEQHIYEKLEAITDEENDMLDLAYGLTDRSRLGCQICLTKAMDNMTVRVPDAVSDARESIDMGMNSSKIE</sequence>
<keyword id="KW-0001">2Fe-2S</keyword>
<keyword id="KW-0007">Acetylation</keyword>
<keyword id="KW-0153">Cholesterol metabolism</keyword>
<keyword id="KW-0903">Direct protein sequencing</keyword>
<keyword id="KW-0249">Electron transport</keyword>
<keyword id="KW-0408">Iron</keyword>
<keyword id="KW-0411">Iron-sulfur</keyword>
<keyword id="KW-0443">Lipid metabolism</keyword>
<keyword id="KW-0479">Metal-binding</keyword>
<keyword id="KW-0496">Mitochondrion</keyword>
<keyword id="KW-0597">Phosphoprotein</keyword>
<keyword id="KW-1185">Reference proteome</keyword>
<keyword id="KW-0753">Steroid metabolism</keyword>
<keyword id="KW-0755">Steroidogenesis</keyword>
<keyword id="KW-1207">Sterol metabolism</keyword>
<keyword id="KW-0813">Transport</keyword>
<comment type="function">
    <text evidence="1">Essential for the synthesis of various steroid hormones. Participates in the reduction of mitochondrial cytochrome P450 for steroidogenesis. Transfers electrons from adrenodoxin reductase to CYP11A1, a cytochrome P450 that catalyzes cholesterol side-chain cleavage. Does not form a ternary complex with adrenodoxin reductase and CYP11A1 but shuttles between the two enzymes to transfer electrons.</text>
</comment>
<comment type="cofactor">
    <cofactor>
        <name>[2Fe-2S] cluster</name>
        <dbReference type="ChEBI" id="CHEBI:190135"/>
    </cofactor>
    <text>Binds 1 [2Fe-2S] cluster.</text>
</comment>
<comment type="subunit">
    <text evidence="2">Interacts with CYP11A1.</text>
</comment>
<comment type="subcellular location">
    <subcellularLocation>
        <location evidence="2">Mitochondrion matrix</location>
    </subcellularLocation>
</comment>
<comment type="similarity">
    <text evidence="5">Belongs to the adrenodoxin/putidaredoxin family.</text>
</comment>
<gene>
    <name type="primary">FDX1</name>
</gene>
<dbReference type="PIR" id="S21131">
    <property type="entry name" value="S21131"/>
</dbReference>
<dbReference type="SMR" id="P29330"/>
<dbReference type="STRING" id="9940.ENSOARP00000014331"/>
<dbReference type="PaxDb" id="9940-ENSOARP00000014331"/>
<dbReference type="eggNOG" id="KOG3309">
    <property type="taxonomic scope" value="Eukaryota"/>
</dbReference>
<dbReference type="Proteomes" id="UP000002356">
    <property type="component" value="Unplaced"/>
</dbReference>
<dbReference type="GO" id="GO:0005759">
    <property type="term" value="C:mitochondrial matrix"/>
    <property type="evidence" value="ECO:0000250"/>
    <property type="project" value="UniProtKB"/>
</dbReference>
<dbReference type="GO" id="GO:0051537">
    <property type="term" value="F:2 iron, 2 sulfur cluster binding"/>
    <property type="evidence" value="ECO:0000250"/>
    <property type="project" value="UniProtKB"/>
</dbReference>
<dbReference type="GO" id="GO:0009055">
    <property type="term" value="F:electron transfer activity"/>
    <property type="evidence" value="ECO:0000250"/>
    <property type="project" value="UniProtKB"/>
</dbReference>
<dbReference type="GO" id="GO:0046872">
    <property type="term" value="F:metal ion binding"/>
    <property type="evidence" value="ECO:0007669"/>
    <property type="project" value="UniProtKB-KW"/>
</dbReference>
<dbReference type="GO" id="GO:0008203">
    <property type="term" value="P:cholesterol metabolic process"/>
    <property type="evidence" value="ECO:0000250"/>
    <property type="project" value="UniProtKB"/>
</dbReference>
<dbReference type="GO" id="GO:0042446">
    <property type="term" value="P:hormone biosynthetic process"/>
    <property type="evidence" value="ECO:0000250"/>
    <property type="project" value="UniProtKB"/>
</dbReference>
<dbReference type="GO" id="GO:0140647">
    <property type="term" value="P:P450-containing electron transport chain"/>
    <property type="evidence" value="ECO:0007669"/>
    <property type="project" value="InterPro"/>
</dbReference>
<dbReference type="GO" id="GO:0006694">
    <property type="term" value="P:steroid biosynthetic process"/>
    <property type="evidence" value="ECO:0007669"/>
    <property type="project" value="UniProtKB-KW"/>
</dbReference>
<dbReference type="CDD" id="cd00207">
    <property type="entry name" value="fer2"/>
    <property type="match status" value="1"/>
</dbReference>
<dbReference type="FunFam" id="3.10.20.30:FF:000013">
    <property type="entry name" value="Adrenodoxin, mitochondrial"/>
    <property type="match status" value="1"/>
</dbReference>
<dbReference type="Gene3D" id="3.10.20.30">
    <property type="match status" value="1"/>
</dbReference>
<dbReference type="InterPro" id="IPR036010">
    <property type="entry name" value="2Fe-2S_ferredoxin-like_sf"/>
</dbReference>
<dbReference type="InterPro" id="IPR001041">
    <property type="entry name" value="2Fe-2S_ferredoxin-type"/>
</dbReference>
<dbReference type="InterPro" id="IPR001055">
    <property type="entry name" value="Adrenodoxin-like"/>
</dbReference>
<dbReference type="InterPro" id="IPR018298">
    <property type="entry name" value="Adrenodoxin_Fe-S_BS"/>
</dbReference>
<dbReference type="InterPro" id="IPR012675">
    <property type="entry name" value="Beta-grasp_dom_sf"/>
</dbReference>
<dbReference type="PANTHER" id="PTHR23426:SF26">
    <property type="entry name" value="ADRENODOXIN, MITOCHONDRIAL"/>
    <property type="match status" value="1"/>
</dbReference>
<dbReference type="PANTHER" id="PTHR23426">
    <property type="entry name" value="FERREDOXIN/ADRENODOXIN"/>
    <property type="match status" value="1"/>
</dbReference>
<dbReference type="Pfam" id="PF00111">
    <property type="entry name" value="Fer2"/>
    <property type="match status" value="1"/>
</dbReference>
<dbReference type="PRINTS" id="PR00355">
    <property type="entry name" value="ADRENODOXIN"/>
</dbReference>
<dbReference type="SUPFAM" id="SSF54292">
    <property type="entry name" value="2Fe-2S ferredoxin-like"/>
    <property type="match status" value="1"/>
</dbReference>
<dbReference type="PROSITE" id="PS51085">
    <property type="entry name" value="2FE2S_FER_2"/>
    <property type="match status" value="1"/>
</dbReference>
<dbReference type="PROSITE" id="PS00814">
    <property type="entry name" value="ADX"/>
    <property type="match status" value="1"/>
</dbReference>
<evidence type="ECO:0000250" key="1">
    <source>
        <dbReference type="UniProtKB" id="P00257"/>
    </source>
</evidence>
<evidence type="ECO:0000250" key="2">
    <source>
        <dbReference type="UniProtKB" id="P10109"/>
    </source>
</evidence>
<evidence type="ECO:0000250" key="3">
    <source>
        <dbReference type="UniProtKB" id="P46656"/>
    </source>
</evidence>
<evidence type="ECO:0000255" key="4">
    <source>
        <dbReference type="PROSITE-ProRule" id="PRU00465"/>
    </source>
</evidence>
<evidence type="ECO:0000305" key="5"/>
<organism>
    <name type="scientific">Ovis aries</name>
    <name type="common">Sheep</name>
    <dbReference type="NCBI Taxonomy" id="9940"/>
    <lineage>
        <taxon>Eukaryota</taxon>
        <taxon>Metazoa</taxon>
        <taxon>Chordata</taxon>
        <taxon>Craniata</taxon>
        <taxon>Vertebrata</taxon>
        <taxon>Euteleostomi</taxon>
        <taxon>Mammalia</taxon>
        <taxon>Eutheria</taxon>
        <taxon>Laurasiatheria</taxon>
        <taxon>Artiodactyla</taxon>
        <taxon>Ruminantia</taxon>
        <taxon>Pecora</taxon>
        <taxon>Bovidae</taxon>
        <taxon>Caprinae</taxon>
        <taxon>Ovis</taxon>
    </lineage>
</organism>